<proteinExistence type="inferred from homology"/>
<sequence>MVAGSGRTYRTVYRHLLTRVDPEVAHRWAFAGMRAASRVPVAPHVLRRAFVEPDPRLRTRVLGIDFPTPLGLAAGFDKNATGISALGNFGFSCVEIGTVTARPQPGNPKPRLHRLVADRAVVNRMGFNNAGAEVVARRLRQLRAVPPVHPVVIGVNIGKSKVVAEADAAQDYATSARLLAPYADYLVVNVSSPNTPGLRDLQAVEKLRPVLRAVREAADGAAHRHVPLLVKIAPDLSDEDVDAVADLAVEEELDGIVATNTTISREGLRSPAALVAAAGGGGLSGAPLKERSLEVLHRLAARTRGSLVLVSVGGIETAQDIAERLDAGASLVQAYTAFIYEGPGWARRVLGELAASRSRRETDRPS</sequence>
<reference key="1">
    <citation type="journal article" date="2008" name="PLoS ONE">
        <title>Survival in nuclear waste, extreme resistance, and potential applications gleaned from the genome sequence of Kineococcus radiotolerans SRS30216.</title>
        <authorList>
            <person name="Bagwell C.E."/>
            <person name="Bhat S."/>
            <person name="Hawkins G.M."/>
            <person name="Smith B.W."/>
            <person name="Biswas T."/>
            <person name="Hoover T.R."/>
            <person name="Saunders E."/>
            <person name="Han C.S."/>
            <person name="Tsodikov O.V."/>
            <person name="Shimkets L.J."/>
        </authorList>
    </citation>
    <scope>NUCLEOTIDE SEQUENCE [LARGE SCALE GENOMIC DNA]</scope>
    <source>
        <strain>ATCC BAA-149 / DSM 14245 / SRS30216</strain>
    </source>
</reference>
<dbReference type="EC" id="1.3.5.2" evidence="1"/>
<dbReference type="EMBL" id="CP000750">
    <property type="protein sequence ID" value="ABS04732.1"/>
    <property type="molecule type" value="Genomic_DNA"/>
</dbReference>
<dbReference type="RefSeq" id="WP_012087010.1">
    <property type="nucleotide sequence ID" value="NC_009664.2"/>
</dbReference>
<dbReference type="SMR" id="A6WD43"/>
<dbReference type="STRING" id="266940.Krad_3268"/>
<dbReference type="KEGG" id="kra:Krad_3268"/>
<dbReference type="eggNOG" id="COG0167">
    <property type="taxonomic scope" value="Bacteria"/>
</dbReference>
<dbReference type="HOGENOM" id="CLU_013640_2_0_11"/>
<dbReference type="OrthoDB" id="9802377at2"/>
<dbReference type="UniPathway" id="UPA00070">
    <property type="reaction ID" value="UER00946"/>
</dbReference>
<dbReference type="Proteomes" id="UP000001116">
    <property type="component" value="Chromosome"/>
</dbReference>
<dbReference type="GO" id="GO:0005737">
    <property type="term" value="C:cytoplasm"/>
    <property type="evidence" value="ECO:0007669"/>
    <property type="project" value="InterPro"/>
</dbReference>
<dbReference type="GO" id="GO:0005886">
    <property type="term" value="C:plasma membrane"/>
    <property type="evidence" value="ECO:0007669"/>
    <property type="project" value="UniProtKB-SubCell"/>
</dbReference>
<dbReference type="GO" id="GO:0106430">
    <property type="term" value="F:dihydroorotate dehydrogenase (quinone) activity"/>
    <property type="evidence" value="ECO:0007669"/>
    <property type="project" value="UniProtKB-EC"/>
</dbReference>
<dbReference type="GO" id="GO:0006207">
    <property type="term" value="P:'de novo' pyrimidine nucleobase biosynthetic process"/>
    <property type="evidence" value="ECO:0007669"/>
    <property type="project" value="InterPro"/>
</dbReference>
<dbReference type="GO" id="GO:0044205">
    <property type="term" value="P:'de novo' UMP biosynthetic process"/>
    <property type="evidence" value="ECO:0007669"/>
    <property type="project" value="UniProtKB-UniRule"/>
</dbReference>
<dbReference type="CDD" id="cd04738">
    <property type="entry name" value="DHOD_2_like"/>
    <property type="match status" value="1"/>
</dbReference>
<dbReference type="FunFam" id="3.20.20.70:FF:000123">
    <property type="entry name" value="Dihydroorotate dehydrogenase (quinone)"/>
    <property type="match status" value="1"/>
</dbReference>
<dbReference type="Gene3D" id="3.20.20.70">
    <property type="entry name" value="Aldolase class I"/>
    <property type="match status" value="1"/>
</dbReference>
<dbReference type="HAMAP" id="MF_00225">
    <property type="entry name" value="DHO_dh_type2"/>
    <property type="match status" value="1"/>
</dbReference>
<dbReference type="InterPro" id="IPR013785">
    <property type="entry name" value="Aldolase_TIM"/>
</dbReference>
<dbReference type="InterPro" id="IPR050074">
    <property type="entry name" value="DHO_dehydrogenase"/>
</dbReference>
<dbReference type="InterPro" id="IPR005719">
    <property type="entry name" value="Dihydroorotate_DH_2"/>
</dbReference>
<dbReference type="InterPro" id="IPR005720">
    <property type="entry name" value="Dihydroorotate_DH_cat"/>
</dbReference>
<dbReference type="InterPro" id="IPR001295">
    <property type="entry name" value="Dihydroorotate_DH_CS"/>
</dbReference>
<dbReference type="NCBIfam" id="NF003645">
    <property type="entry name" value="PRK05286.1-2"/>
    <property type="match status" value="1"/>
</dbReference>
<dbReference type="NCBIfam" id="NF003648">
    <property type="entry name" value="PRK05286.2-1"/>
    <property type="match status" value="1"/>
</dbReference>
<dbReference type="NCBIfam" id="NF003652">
    <property type="entry name" value="PRK05286.2-5"/>
    <property type="match status" value="1"/>
</dbReference>
<dbReference type="NCBIfam" id="TIGR01036">
    <property type="entry name" value="pyrD_sub2"/>
    <property type="match status" value="1"/>
</dbReference>
<dbReference type="PANTHER" id="PTHR48109:SF4">
    <property type="entry name" value="DIHYDROOROTATE DEHYDROGENASE (QUINONE), MITOCHONDRIAL"/>
    <property type="match status" value="1"/>
</dbReference>
<dbReference type="PANTHER" id="PTHR48109">
    <property type="entry name" value="DIHYDROOROTATE DEHYDROGENASE (QUINONE), MITOCHONDRIAL-RELATED"/>
    <property type="match status" value="1"/>
</dbReference>
<dbReference type="Pfam" id="PF01180">
    <property type="entry name" value="DHO_dh"/>
    <property type="match status" value="1"/>
</dbReference>
<dbReference type="SUPFAM" id="SSF51395">
    <property type="entry name" value="FMN-linked oxidoreductases"/>
    <property type="match status" value="1"/>
</dbReference>
<dbReference type="PROSITE" id="PS00911">
    <property type="entry name" value="DHODEHASE_1"/>
    <property type="match status" value="1"/>
</dbReference>
<comment type="function">
    <text evidence="1">Catalyzes the conversion of dihydroorotate to orotate with quinone as electron acceptor.</text>
</comment>
<comment type="catalytic activity">
    <reaction evidence="1">
        <text>(S)-dihydroorotate + a quinone = orotate + a quinol</text>
        <dbReference type="Rhea" id="RHEA:30187"/>
        <dbReference type="ChEBI" id="CHEBI:24646"/>
        <dbReference type="ChEBI" id="CHEBI:30839"/>
        <dbReference type="ChEBI" id="CHEBI:30864"/>
        <dbReference type="ChEBI" id="CHEBI:132124"/>
        <dbReference type="EC" id="1.3.5.2"/>
    </reaction>
</comment>
<comment type="cofactor">
    <cofactor evidence="1">
        <name>FMN</name>
        <dbReference type="ChEBI" id="CHEBI:58210"/>
    </cofactor>
    <text evidence="1">Binds 1 FMN per subunit.</text>
</comment>
<comment type="pathway">
    <text evidence="1">Pyrimidine metabolism; UMP biosynthesis via de novo pathway; orotate from (S)-dihydroorotate (quinone route): step 1/1.</text>
</comment>
<comment type="subunit">
    <text evidence="1">Monomer.</text>
</comment>
<comment type="subcellular location">
    <subcellularLocation>
        <location evidence="1">Cell membrane</location>
        <topology evidence="1">Peripheral membrane protein</topology>
    </subcellularLocation>
</comment>
<comment type="similarity">
    <text evidence="1">Belongs to the dihydroorotate dehydrogenase family. Type 2 subfamily.</text>
</comment>
<organism>
    <name type="scientific">Kineococcus radiotolerans (strain ATCC BAA-149 / DSM 14245 / SRS30216)</name>
    <dbReference type="NCBI Taxonomy" id="266940"/>
    <lineage>
        <taxon>Bacteria</taxon>
        <taxon>Bacillati</taxon>
        <taxon>Actinomycetota</taxon>
        <taxon>Actinomycetes</taxon>
        <taxon>Kineosporiales</taxon>
        <taxon>Kineosporiaceae</taxon>
        <taxon>Kineococcus</taxon>
    </lineage>
</organism>
<protein>
    <recommendedName>
        <fullName evidence="1">Dihydroorotate dehydrogenase (quinone)</fullName>
        <ecNumber evidence="1">1.3.5.2</ecNumber>
    </recommendedName>
    <alternativeName>
        <fullName evidence="1">DHOdehase</fullName>
        <shortName evidence="1">DHOD</shortName>
        <shortName evidence="1">DHODase</shortName>
    </alternativeName>
    <alternativeName>
        <fullName evidence="1">Dihydroorotate oxidase</fullName>
    </alternativeName>
</protein>
<feature type="chain" id="PRO_0000336472" description="Dihydroorotate dehydrogenase (quinone)">
    <location>
        <begin position="1"/>
        <end position="366"/>
    </location>
</feature>
<feature type="active site" description="Nucleophile" evidence="1">
    <location>
        <position position="192"/>
    </location>
</feature>
<feature type="binding site" evidence="1">
    <location>
        <begin position="74"/>
        <end position="78"/>
    </location>
    <ligand>
        <name>FMN</name>
        <dbReference type="ChEBI" id="CHEBI:58210"/>
    </ligand>
</feature>
<feature type="binding site" evidence="1">
    <location>
        <position position="78"/>
    </location>
    <ligand>
        <name>substrate</name>
    </ligand>
</feature>
<feature type="binding site" evidence="1">
    <location>
        <position position="98"/>
    </location>
    <ligand>
        <name>FMN</name>
        <dbReference type="ChEBI" id="CHEBI:58210"/>
    </ligand>
</feature>
<feature type="binding site" evidence="1">
    <location>
        <begin position="123"/>
        <end position="127"/>
    </location>
    <ligand>
        <name>substrate</name>
    </ligand>
</feature>
<feature type="binding site" evidence="1">
    <location>
        <position position="156"/>
    </location>
    <ligand>
        <name>FMN</name>
        <dbReference type="ChEBI" id="CHEBI:58210"/>
    </ligand>
</feature>
<feature type="binding site" evidence="1">
    <location>
        <position position="189"/>
    </location>
    <ligand>
        <name>FMN</name>
        <dbReference type="ChEBI" id="CHEBI:58210"/>
    </ligand>
</feature>
<feature type="binding site" evidence="1">
    <location>
        <position position="189"/>
    </location>
    <ligand>
        <name>substrate</name>
    </ligand>
</feature>
<feature type="binding site" evidence="1">
    <location>
        <position position="194"/>
    </location>
    <ligand>
        <name>substrate</name>
    </ligand>
</feature>
<feature type="binding site" evidence="1">
    <location>
        <position position="231"/>
    </location>
    <ligand>
        <name>FMN</name>
        <dbReference type="ChEBI" id="CHEBI:58210"/>
    </ligand>
</feature>
<feature type="binding site" evidence="1">
    <location>
        <position position="259"/>
    </location>
    <ligand>
        <name>FMN</name>
        <dbReference type="ChEBI" id="CHEBI:58210"/>
    </ligand>
</feature>
<feature type="binding site" evidence="1">
    <location>
        <begin position="260"/>
        <end position="261"/>
    </location>
    <ligand>
        <name>substrate</name>
    </ligand>
</feature>
<feature type="binding site" evidence="1">
    <location>
        <position position="285"/>
    </location>
    <ligand>
        <name>FMN</name>
        <dbReference type="ChEBI" id="CHEBI:58210"/>
    </ligand>
</feature>
<feature type="binding site" evidence="1">
    <location>
        <position position="314"/>
    </location>
    <ligand>
        <name>FMN</name>
        <dbReference type="ChEBI" id="CHEBI:58210"/>
    </ligand>
</feature>
<feature type="binding site" evidence="1">
    <location>
        <begin position="335"/>
        <end position="336"/>
    </location>
    <ligand>
        <name>FMN</name>
        <dbReference type="ChEBI" id="CHEBI:58210"/>
    </ligand>
</feature>
<gene>
    <name evidence="1" type="primary">pyrD</name>
    <name type="ordered locus">Krad_3268</name>
</gene>
<name>PYRD_KINRD</name>
<accession>A6WD43</accession>
<evidence type="ECO:0000255" key="1">
    <source>
        <dbReference type="HAMAP-Rule" id="MF_00225"/>
    </source>
</evidence>
<keyword id="KW-1003">Cell membrane</keyword>
<keyword id="KW-0285">Flavoprotein</keyword>
<keyword id="KW-0288">FMN</keyword>
<keyword id="KW-0472">Membrane</keyword>
<keyword id="KW-0560">Oxidoreductase</keyword>
<keyword id="KW-0665">Pyrimidine biosynthesis</keyword>
<keyword id="KW-1185">Reference proteome</keyword>